<gene>
    <name evidence="8 9 12" type="primary">vanC2</name>
    <name evidence="3" type="synonym">ddl</name>
    <name evidence="11" type="synonym">vanC-2</name>
    <name evidence="14" type="ORF">P7I34_04740</name>
</gene>
<evidence type="ECO:0000250" key="1">
    <source>
        <dbReference type="UniProtKB" id="P25051"/>
    </source>
</evidence>
<evidence type="ECO:0000250" key="2">
    <source>
        <dbReference type="UniProtKB" id="P29753"/>
    </source>
</evidence>
<evidence type="ECO:0000255" key="3">
    <source>
        <dbReference type="HAMAP-Rule" id="MF_00047"/>
    </source>
</evidence>
<evidence type="ECO:0000255" key="4">
    <source>
        <dbReference type="PIRSR" id="PIRSR039102-1"/>
    </source>
</evidence>
<evidence type="ECO:0000255" key="5">
    <source>
        <dbReference type="PROSITE-ProRule" id="PRU00409"/>
    </source>
</evidence>
<evidence type="ECO:0000269" key="6">
    <source>
    </source>
</evidence>
<evidence type="ECO:0000269" key="7">
    <source>
    </source>
</evidence>
<evidence type="ECO:0000303" key="8">
    <source>
    </source>
</evidence>
<evidence type="ECO:0000303" key="9">
    <source>
    </source>
</evidence>
<evidence type="ECO:0000305" key="10"/>
<evidence type="ECO:0000312" key="11">
    <source>
        <dbReference type="EMBL" id="AAA60990.1"/>
    </source>
</evidence>
<evidence type="ECO:0000312" key="12">
    <source>
        <dbReference type="EMBL" id="ABX79432.1"/>
    </source>
</evidence>
<evidence type="ECO:0000312" key="13">
    <source>
        <dbReference type="EMBL" id="ABX79435.1"/>
    </source>
</evidence>
<evidence type="ECO:0000312" key="14">
    <source>
        <dbReference type="EMBL" id="MDT2981959.1"/>
    </source>
</evidence>
<proteinExistence type="evidence at protein level"/>
<name>VANC2_ENTCA</name>
<feature type="chain" id="PRO_0000461918" description="Vancomycin C-type resistance protein VanC2">
    <location>
        <begin position="1"/>
        <end position="350"/>
    </location>
</feature>
<feature type="domain" description="ATP-grasp" evidence="5">
    <location>
        <begin position="141"/>
        <end position="343"/>
    </location>
</feature>
<feature type="active site" evidence="4">
    <location>
        <position position="14"/>
    </location>
</feature>
<feature type="active site" evidence="4">
    <location>
        <position position="187"/>
    </location>
</feature>
<feature type="active site" evidence="4">
    <location>
        <position position="321"/>
    </location>
</feature>
<feature type="binding site" evidence="5">
    <location>
        <begin position="171"/>
        <end position="226"/>
    </location>
    <ligand>
        <name>ATP</name>
        <dbReference type="ChEBI" id="CHEBI:30616"/>
    </ligand>
</feature>
<feature type="binding site" evidence="5">
    <location>
        <position position="297"/>
    </location>
    <ligand>
        <name>Mg(2+)</name>
        <dbReference type="ChEBI" id="CHEBI:18420"/>
        <label>1</label>
    </ligand>
</feature>
<feature type="binding site" evidence="5">
    <location>
        <position position="297"/>
    </location>
    <ligand>
        <name>Mn(2+)</name>
        <dbReference type="ChEBI" id="CHEBI:29035"/>
        <label>1</label>
    </ligand>
</feature>
<feature type="binding site" evidence="5">
    <location>
        <position position="310"/>
    </location>
    <ligand>
        <name>Mg(2+)</name>
        <dbReference type="ChEBI" id="CHEBI:18420"/>
        <label>1</label>
    </ligand>
</feature>
<feature type="binding site" evidence="5">
    <location>
        <position position="310"/>
    </location>
    <ligand>
        <name>Mg(2+)</name>
        <dbReference type="ChEBI" id="CHEBI:18420"/>
        <label>2</label>
    </ligand>
</feature>
<feature type="binding site" evidence="5">
    <location>
        <position position="310"/>
    </location>
    <ligand>
        <name>Mn(2+)</name>
        <dbReference type="ChEBI" id="CHEBI:29035"/>
        <label>1</label>
    </ligand>
</feature>
<feature type="binding site" evidence="5">
    <location>
        <position position="310"/>
    </location>
    <ligand>
        <name>Mn(2+)</name>
        <dbReference type="ChEBI" id="CHEBI:29035"/>
        <label>2</label>
    </ligand>
</feature>
<feature type="binding site" evidence="5">
    <location>
        <position position="312"/>
    </location>
    <ligand>
        <name>Mg(2+)</name>
        <dbReference type="ChEBI" id="CHEBI:18420"/>
        <label>2</label>
    </ligand>
</feature>
<feature type="binding site" evidence="5">
    <location>
        <position position="312"/>
    </location>
    <ligand>
        <name>Mn(2+)</name>
        <dbReference type="ChEBI" id="CHEBI:29035"/>
        <label>2</label>
    </ligand>
</feature>
<feature type="mutagenesis site" description="Slight increase, of threefold to fourfold, in catalytic efficiency as a D-Ala--D-Ala ligase. Decreases catalytic efficiency as D-Ala--D-Ser ligase by about 10-12-fold." evidence="7">
    <original>F</original>
    <variation>Y</variation>
    <location>
        <position position="250"/>
    </location>
</feature>
<feature type="mutagenesis site" description="Slight increase, of threefold to fourfold, in catalytic efficiency as a D-Ala--D-Ala ligase. Decreases catalytic efficiency as D-Ala--D-Ser ligase by about 10-12-fold." evidence="7">
    <original>R</original>
    <variation>M</variation>
    <location>
        <position position="322"/>
    </location>
</feature>
<protein>
    <recommendedName>
        <fullName evidence="8 10">Vancomycin C-type resistance protein VanC2</fullName>
        <ecNumber evidence="6 7">6.3.2.35</ecNumber>
    </recommendedName>
    <alternativeName>
        <fullName evidence="3">D-alanine--D-serine ligase</fullName>
    </alternativeName>
    <alternativeName>
        <fullName evidence="10">VanC2 ligase</fullName>
    </alternativeName>
</protein>
<sequence>MKKIAIIFGGNSPEYTVSLASATSAIEALQSSPYDYDLSLIGIAPDAMDWYLYTGELENIRQDTWLLDTKHKQKIQPLFEGNGFWLSEEQQTLVPDVLFPIMHGKYGEDGSIQGLFELMKLPYVGCGVAGSALCMNKWLLHQAAAAIGVQSAPTILLTNQANQQEQIEAFIQTHGFPVFFKPNEAGSSKGITKVTCVEEIASALKEAFTYCSAVLLQKNIAGVEIGCGILGNDSLTVGACDAISLVDGFFDFEEKYQLISAKITVPAPLPETIETKVKEQAQLLYRSLGLKGLARIDFFVTERGELYLNEINTMPGFTSHSRYPAMMAAVGLSYQELLQKLLVLAKEEVK</sequence>
<reference evidence="11" key="1">
    <citation type="journal article" date="1994" name="Antimicrob. Agents Chemother.">
        <title>Analysis of genes encoding D-alanine-D-alanine ligase-related enzymes in Enterococcus casseliflavus and Enterococcus flavescens.</title>
        <authorList>
            <person name="Navarro F."/>
            <person name="Courvalin P."/>
        </authorList>
    </citation>
    <scope>NUCLEOTIDE SEQUENCE [GENOMIC DNA]</scope>
</reference>
<reference evidence="12" key="2">
    <citation type="journal article" date="2009" name="Microb. Drug Resist.">
        <title>Genetic diversity of the low-level vancomycin resistance gene vanC-2/vanC-3 and identification of a novel vanC subtype (vanC-4) in Enterococcus casseliflavus.</title>
        <authorList>
            <person name="Watanabe S."/>
            <person name="Kobayashi N."/>
            <person name="Quinones D."/>
            <person name="Hayakawa S."/>
            <person name="Nagashima S."/>
            <person name="Uehara N."/>
            <person name="Watanabe N."/>
        </authorList>
    </citation>
    <scope>NUCLEOTIDE SEQUENCE [GENOMIC DNA]</scope>
    <source>
        <strain evidence="12">F33</strain>
        <strain evidence="13">NCDD2376</strain>
    </source>
</reference>
<reference evidence="14" key="3">
    <citation type="submission" date="2023-03" db="EMBL/GenBank/DDBJ databases">
        <authorList>
            <person name="Shen W."/>
            <person name="Cai J."/>
        </authorList>
    </citation>
    <scope>NUCLEOTIDE SEQUENCE [LARGE SCALE GENOMIC DNA]</scope>
    <source>
        <strain evidence="14">B516</strain>
    </source>
</reference>
<reference evidence="10" key="4">
    <citation type="journal article" date="1997" name="Proc. Natl. Acad. Sci. U.S.A.">
        <title>Bacterial resistance to vancomycin: overproduction, purification, and characterization of VanC2 from Enterococcus casseliflavus as a D-Ala-D-Ser ligase.</title>
        <authorList>
            <person name="Park I.S."/>
            <person name="Lin C.H."/>
            <person name="Walsh C.T."/>
        </authorList>
    </citation>
    <scope>FUNCTION</scope>
    <scope>CATALYTIC ACTIVITY</scope>
    <scope>BIOPHYSICOCHEMICAL PROPERTIES</scope>
    <scope>ACTIVITY REGULATION</scope>
    <scope>SUBUNIT</scope>
    <source>
        <strain evidence="8">ATCC 25788</strain>
    </source>
</reference>
<reference evidence="10" key="5">
    <citation type="journal article" date="1998" name="Chem. Biol.">
        <title>Active-site mutants of the VanC2 D-alanyl-D-serine ligase, characteristic of one vancomycin-resistant bacterial phenotype, revert towards wild-type D-alanyl-D-alanine ligases.</title>
        <authorList>
            <person name="Healy V.L."/>
            <person name="Park I.S."/>
            <person name="Walsh C.T."/>
        </authorList>
    </citation>
    <scope>FUNCTION</scope>
    <scope>CATALYTIC ACTIVITY</scope>
    <scope>BIOPHYSICOCHEMICAL PROPERTIES</scope>
    <scope>MUTAGENESIS OF PHE-250 AND ARG-322</scope>
</reference>
<comment type="function">
    <text evidence="2 6 7">Required for low-level resistance to the glycopeptide antibiotic vancomycin (By similarity). D-alanine--D-alanine ligase of altered specificity, which catalyzes synthesis of D-Ala-D-Ser; produces a peptidoglycan which does not terminate in D-alanine but in D-serine, thus probably reducing affinity for vancomycin (PubMed:9294159, PubMed:9545431). Only insignificant catalytic synthesis of D-Ala-D-Ala in vitro (PubMed:9294159, PubMed:9545431).</text>
</comment>
<comment type="catalytic activity">
    <reaction evidence="6 7">
        <text>D-serine + D-alanine + ATP = D-alanyl-D-serine + ADP + phosphate + H(+)</text>
        <dbReference type="Rhea" id="RHEA:27706"/>
        <dbReference type="ChEBI" id="CHEBI:15378"/>
        <dbReference type="ChEBI" id="CHEBI:30616"/>
        <dbReference type="ChEBI" id="CHEBI:35247"/>
        <dbReference type="ChEBI" id="CHEBI:43474"/>
        <dbReference type="ChEBI" id="CHEBI:57416"/>
        <dbReference type="ChEBI" id="CHEBI:60390"/>
        <dbReference type="ChEBI" id="CHEBI:456216"/>
        <dbReference type="EC" id="6.3.2.35"/>
    </reaction>
</comment>
<comment type="cofactor">
    <cofactor evidence="5">
        <name>Mg(2+)</name>
        <dbReference type="ChEBI" id="CHEBI:18420"/>
    </cofactor>
    <cofactor evidence="5">
        <name>Mn(2+)</name>
        <dbReference type="ChEBI" id="CHEBI:29035"/>
    </cofactor>
    <text evidence="5">Binds 2 Mg(2+) or Mn(2+) ions per subunit.</text>
</comment>
<comment type="activity regulation">
    <text evidence="6">Inhibited by D-cycloserine.</text>
</comment>
<comment type="biophysicochemical properties">
    <kinetics>
        <KM evidence="6">1.8 mM for D-serine (at pH 7.5)</KM>
        <KM evidence="7">2.6 mM for D-serine (at pH 7.5)</KM>
        <KM evidence="7">100 mM for D-alanine (at pH 7.5)</KM>
        <KM evidence="7">100 mM for D-threonine (at pH 7.5)</KM>
        <KM evidence="7">42 mM for D-allothreonine (at pH 7.5)</KM>
        <KM evidence="7">241 mM for D-homoserine (at pH 7.5)</KM>
        <KM evidence="7">11.5 mM for D-asparagine (at pH 7.5)</KM>
        <KM evidence="6">7.2 mM for D-asparagine (at pH 7.5)</KM>
        <text evidence="6 7">kcat is 490 min(-1) with D-serine as substrate (at pH 7.5) (PubMed:9294159). kcat is 1092 min(-1) with D-serine as substrate (at pH 7.5) (PubMed:9545431). kcat is 178 min(-1) with D-alanine as substrate (at pH 7.5) (PubMed:9545431). kcat is 480 min(-1) with D-threonine as substrate (at pH 7.5) (PubMed:9545431). kcat is 124 min(-1) with D-allothreonine as substrate (at pH 7.5) (PubMed:9545431). kcat is 290 min(-1) with D-homoserine as substrate (at pH 7.5) (PubMed:9545431). kcat is 1620 min(-1) with D-asparagine as substrate (at pH 7.5) (PubMed:9545431). kcat is 532 min(-1) with D-asparagine as substrate (at pH 7.5) (PubMed:9294159).</text>
    </kinetics>
</comment>
<comment type="pathway">
    <text evidence="3">Cell wall biogenesis; peptidoglycan biosynthesis.</text>
</comment>
<comment type="subunit">
    <text evidence="6">Homodimer.</text>
</comment>
<comment type="subcellular location">
    <subcellularLocation>
        <location evidence="1">Cell membrane</location>
        <topology evidence="10">Peripheral membrane protein</topology>
        <orientation evidence="10">Cytoplasmic side</orientation>
    </subcellularLocation>
</comment>
<comment type="miscellaneous">
    <text evidence="6">There is about a 400-fold difference in catalytic efficiency of VanC2 for using D-serine over D-alanine.</text>
</comment>
<comment type="similarity">
    <text evidence="3">Belongs to the D-alanine--D-alanine ligase family.</text>
</comment>
<organism evidence="11">
    <name type="scientific">Enterococcus casseliflavus</name>
    <name type="common">Enterococcus flavescens</name>
    <dbReference type="NCBI Taxonomy" id="37734"/>
    <lineage>
        <taxon>Bacteria</taxon>
        <taxon>Bacillati</taxon>
        <taxon>Bacillota</taxon>
        <taxon>Bacilli</taxon>
        <taxon>Lactobacillales</taxon>
        <taxon>Enterococcaceae</taxon>
        <taxon>Enterococcus</taxon>
    </lineage>
</organism>
<dbReference type="EC" id="6.3.2.35" evidence="6 7"/>
<dbReference type="EMBL" id="L29638">
    <property type="protein sequence ID" value="AAA60990.1"/>
    <property type="molecule type" value="Genomic_DNA"/>
</dbReference>
<dbReference type="EMBL" id="EU151761">
    <property type="protein sequence ID" value="ABX79432.1"/>
    <property type="molecule type" value="Genomic_DNA"/>
</dbReference>
<dbReference type="EMBL" id="EU151764">
    <property type="protein sequence ID" value="ABX79435.1"/>
    <property type="molecule type" value="Genomic_DNA"/>
</dbReference>
<dbReference type="EMBL" id="JARQDZ010000002">
    <property type="protein sequence ID" value="MDT2981959.1"/>
    <property type="molecule type" value="Genomic_DNA"/>
</dbReference>
<dbReference type="SMR" id="Q47720"/>
<dbReference type="PATRIC" id="fig|37734.14.peg.1222"/>
<dbReference type="BioCyc" id="MetaCyc:MONOMER-15465"/>
<dbReference type="UniPathway" id="UPA00219"/>
<dbReference type="Proteomes" id="UP001253851">
    <property type="component" value="Unassembled WGS sequence"/>
</dbReference>
<dbReference type="GO" id="GO:0005829">
    <property type="term" value="C:cytosol"/>
    <property type="evidence" value="ECO:0007669"/>
    <property type="project" value="TreeGrafter"/>
</dbReference>
<dbReference type="GO" id="GO:0005886">
    <property type="term" value="C:plasma membrane"/>
    <property type="evidence" value="ECO:0007669"/>
    <property type="project" value="UniProtKB-SubCell"/>
</dbReference>
<dbReference type="GO" id="GO:0005524">
    <property type="term" value="F:ATP binding"/>
    <property type="evidence" value="ECO:0007669"/>
    <property type="project" value="UniProtKB-UniRule"/>
</dbReference>
<dbReference type="GO" id="GO:0008716">
    <property type="term" value="F:D-alanine-D-alanine ligase activity"/>
    <property type="evidence" value="ECO:0007669"/>
    <property type="project" value="UniProtKB-UniRule"/>
</dbReference>
<dbReference type="GO" id="GO:0046872">
    <property type="term" value="F:metal ion binding"/>
    <property type="evidence" value="ECO:0007669"/>
    <property type="project" value="UniProtKB-KW"/>
</dbReference>
<dbReference type="GO" id="GO:0071555">
    <property type="term" value="P:cell wall organization"/>
    <property type="evidence" value="ECO:0007669"/>
    <property type="project" value="UniProtKB-KW"/>
</dbReference>
<dbReference type="GO" id="GO:0009252">
    <property type="term" value="P:peptidoglycan biosynthetic process"/>
    <property type="evidence" value="ECO:0007669"/>
    <property type="project" value="UniProtKB-UniRule"/>
</dbReference>
<dbReference type="GO" id="GO:0008360">
    <property type="term" value="P:regulation of cell shape"/>
    <property type="evidence" value="ECO:0007669"/>
    <property type="project" value="UniProtKB-KW"/>
</dbReference>
<dbReference type="FunFam" id="3.30.470.20:FF:000008">
    <property type="entry name" value="D-alanine--D-alanine ligase"/>
    <property type="match status" value="1"/>
</dbReference>
<dbReference type="Gene3D" id="3.40.50.20">
    <property type="match status" value="1"/>
</dbReference>
<dbReference type="Gene3D" id="3.30.1490.20">
    <property type="entry name" value="ATP-grasp fold, A domain"/>
    <property type="match status" value="1"/>
</dbReference>
<dbReference type="Gene3D" id="3.30.470.20">
    <property type="entry name" value="ATP-grasp fold, B domain"/>
    <property type="match status" value="1"/>
</dbReference>
<dbReference type="HAMAP" id="MF_00047">
    <property type="entry name" value="Dala_Dala_lig"/>
    <property type="match status" value="1"/>
</dbReference>
<dbReference type="InterPro" id="IPR011761">
    <property type="entry name" value="ATP-grasp"/>
</dbReference>
<dbReference type="InterPro" id="IPR013815">
    <property type="entry name" value="ATP_grasp_subdomain_1"/>
</dbReference>
<dbReference type="InterPro" id="IPR000291">
    <property type="entry name" value="D-Ala_lig_Van_CS"/>
</dbReference>
<dbReference type="InterPro" id="IPR005905">
    <property type="entry name" value="D_ala_D_ala"/>
</dbReference>
<dbReference type="InterPro" id="IPR011095">
    <property type="entry name" value="Dala_Dala_lig_C"/>
</dbReference>
<dbReference type="InterPro" id="IPR011127">
    <property type="entry name" value="Dala_Dala_lig_N"/>
</dbReference>
<dbReference type="InterPro" id="IPR016185">
    <property type="entry name" value="PreATP-grasp_dom_sf"/>
</dbReference>
<dbReference type="NCBIfam" id="TIGR01205">
    <property type="entry name" value="D_ala_D_alaTIGR"/>
    <property type="match status" value="1"/>
</dbReference>
<dbReference type="NCBIfam" id="NF000207">
    <property type="entry name" value="D_ala_D_ser"/>
    <property type="match status" value="1"/>
</dbReference>
<dbReference type="NCBIfam" id="NF012214">
    <property type="entry name" value="D_ala_D_ser_VanC"/>
    <property type="match status" value="1"/>
</dbReference>
<dbReference type="NCBIfam" id="NF002528">
    <property type="entry name" value="PRK01966.1-4"/>
    <property type="match status" value="1"/>
</dbReference>
<dbReference type="PANTHER" id="PTHR23132">
    <property type="entry name" value="D-ALANINE--D-ALANINE LIGASE"/>
    <property type="match status" value="1"/>
</dbReference>
<dbReference type="PANTHER" id="PTHR23132:SF25">
    <property type="entry name" value="D-ALANINE--D-ALANINE LIGASE A"/>
    <property type="match status" value="1"/>
</dbReference>
<dbReference type="Pfam" id="PF07478">
    <property type="entry name" value="Dala_Dala_lig_C"/>
    <property type="match status" value="1"/>
</dbReference>
<dbReference type="Pfam" id="PF01820">
    <property type="entry name" value="Dala_Dala_lig_N"/>
    <property type="match status" value="1"/>
</dbReference>
<dbReference type="PIRSF" id="PIRSF039102">
    <property type="entry name" value="Ddl/VanB"/>
    <property type="match status" value="1"/>
</dbReference>
<dbReference type="SUPFAM" id="SSF56059">
    <property type="entry name" value="Glutathione synthetase ATP-binding domain-like"/>
    <property type="match status" value="1"/>
</dbReference>
<dbReference type="SUPFAM" id="SSF52440">
    <property type="entry name" value="PreATP-grasp domain"/>
    <property type="match status" value="1"/>
</dbReference>
<dbReference type="PROSITE" id="PS50975">
    <property type="entry name" value="ATP_GRASP"/>
    <property type="match status" value="1"/>
</dbReference>
<dbReference type="PROSITE" id="PS00843">
    <property type="entry name" value="DALA_DALA_LIGASE_1"/>
    <property type="match status" value="1"/>
</dbReference>
<dbReference type="PROSITE" id="PS00844">
    <property type="entry name" value="DALA_DALA_LIGASE_2"/>
    <property type="match status" value="1"/>
</dbReference>
<keyword id="KW-0046">Antibiotic resistance</keyword>
<keyword id="KW-0067">ATP-binding</keyword>
<keyword id="KW-1003">Cell membrane</keyword>
<keyword id="KW-0133">Cell shape</keyword>
<keyword id="KW-0961">Cell wall biogenesis/degradation</keyword>
<keyword id="KW-0436">Ligase</keyword>
<keyword id="KW-0460">Magnesium</keyword>
<keyword id="KW-0464">Manganese</keyword>
<keyword id="KW-0472">Membrane</keyword>
<keyword id="KW-0479">Metal-binding</keyword>
<keyword id="KW-0547">Nucleotide-binding</keyword>
<keyword id="KW-0573">Peptidoglycan synthesis</keyword>
<accession>Q47720</accession>